<gene>
    <name evidence="1" type="primary">ruvB</name>
    <name type="ordered locus">RC1_1805</name>
</gene>
<accession>B6ITI4</accession>
<keyword id="KW-0067">ATP-binding</keyword>
<keyword id="KW-0963">Cytoplasm</keyword>
<keyword id="KW-0227">DNA damage</keyword>
<keyword id="KW-0233">DNA recombination</keyword>
<keyword id="KW-0234">DNA repair</keyword>
<keyword id="KW-0238">DNA-binding</keyword>
<keyword id="KW-0378">Hydrolase</keyword>
<keyword id="KW-0547">Nucleotide-binding</keyword>
<keyword id="KW-1185">Reference proteome</keyword>
<evidence type="ECO:0000255" key="1">
    <source>
        <dbReference type="HAMAP-Rule" id="MF_00016"/>
    </source>
</evidence>
<proteinExistence type="inferred from homology"/>
<organism>
    <name type="scientific">Rhodospirillum centenum (strain ATCC 51521 / SW)</name>
    <dbReference type="NCBI Taxonomy" id="414684"/>
    <lineage>
        <taxon>Bacteria</taxon>
        <taxon>Pseudomonadati</taxon>
        <taxon>Pseudomonadota</taxon>
        <taxon>Alphaproteobacteria</taxon>
        <taxon>Rhodospirillales</taxon>
        <taxon>Rhodospirillaceae</taxon>
        <taxon>Rhodospirillum</taxon>
    </lineage>
</organism>
<name>RUVB_RHOCS</name>
<dbReference type="EC" id="3.6.4.-" evidence="1"/>
<dbReference type="EMBL" id="CP000613">
    <property type="protein sequence ID" value="ACI99202.1"/>
    <property type="molecule type" value="Genomic_DNA"/>
</dbReference>
<dbReference type="RefSeq" id="WP_012566987.1">
    <property type="nucleotide sequence ID" value="NC_011420.2"/>
</dbReference>
<dbReference type="SMR" id="B6ITI4"/>
<dbReference type="STRING" id="414684.RC1_1805"/>
<dbReference type="KEGG" id="rce:RC1_1805"/>
<dbReference type="eggNOG" id="COG2255">
    <property type="taxonomic scope" value="Bacteria"/>
</dbReference>
<dbReference type="HOGENOM" id="CLU_055599_1_0_5"/>
<dbReference type="OrthoDB" id="9804478at2"/>
<dbReference type="Proteomes" id="UP000001591">
    <property type="component" value="Chromosome"/>
</dbReference>
<dbReference type="GO" id="GO:0005737">
    <property type="term" value="C:cytoplasm"/>
    <property type="evidence" value="ECO:0007669"/>
    <property type="project" value="UniProtKB-SubCell"/>
</dbReference>
<dbReference type="GO" id="GO:0048476">
    <property type="term" value="C:Holliday junction resolvase complex"/>
    <property type="evidence" value="ECO:0007669"/>
    <property type="project" value="UniProtKB-UniRule"/>
</dbReference>
<dbReference type="GO" id="GO:0005524">
    <property type="term" value="F:ATP binding"/>
    <property type="evidence" value="ECO:0007669"/>
    <property type="project" value="UniProtKB-UniRule"/>
</dbReference>
<dbReference type="GO" id="GO:0016887">
    <property type="term" value="F:ATP hydrolysis activity"/>
    <property type="evidence" value="ECO:0007669"/>
    <property type="project" value="InterPro"/>
</dbReference>
<dbReference type="GO" id="GO:0000400">
    <property type="term" value="F:four-way junction DNA binding"/>
    <property type="evidence" value="ECO:0007669"/>
    <property type="project" value="UniProtKB-UniRule"/>
</dbReference>
<dbReference type="GO" id="GO:0009378">
    <property type="term" value="F:four-way junction helicase activity"/>
    <property type="evidence" value="ECO:0007669"/>
    <property type="project" value="InterPro"/>
</dbReference>
<dbReference type="GO" id="GO:0006310">
    <property type="term" value="P:DNA recombination"/>
    <property type="evidence" value="ECO:0007669"/>
    <property type="project" value="UniProtKB-UniRule"/>
</dbReference>
<dbReference type="GO" id="GO:0006281">
    <property type="term" value="P:DNA repair"/>
    <property type="evidence" value="ECO:0007669"/>
    <property type="project" value="UniProtKB-UniRule"/>
</dbReference>
<dbReference type="CDD" id="cd00009">
    <property type="entry name" value="AAA"/>
    <property type="match status" value="1"/>
</dbReference>
<dbReference type="FunFam" id="3.40.50.300:FF:000073">
    <property type="entry name" value="Holliday junction ATP-dependent DNA helicase RuvB"/>
    <property type="match status" value="1"/>
</dbReference>
<dbReference type="Gene3D" id="1.10.8.60">
    <property type="match status" value="1"/>
</dbReference>
<dbReference type="Gene3D" id="3.40.50.300">
    <property type="entry name" value="P-loop containing nucleotide triphosphate hydrolases"/>
    <property type="match status" value="1"/>
</dbReference>
<dbReference type="Gene3D" id="1.10.10.10">
    <property type="entry name" value="Winged helix-like DNA-binding domain superfamily/Winged helix DNA-binding domain"/>
    <property type="match status" value="1"/>
</dbReference>
<dbReference type="HAMAP" id="MF_00016">
    <property type="entry name" value="DNA_HJ_migration_RuvB"/>
    <property type="match status" value="1"/>
</dbReference>
<dbReference type="InterPro" id="IPR003593">
    <property type="entry name" value="AAA+_ATPase"/>
</dbReference>
<dbReference type="InterPro" id="IPR041445">
    <property type="entry name" value="AAA_lid_4"/>
</dbReference>
<dbReference type="InterPro" id="IPR004605">
    <property type="entry name" value="DNA_helicase_Holl-junc_RuvB"/>
</dbReference>
<dbReference type="InterPro" id="IPR027417">
    <property type="entry name" value="P-loop_NTPase"/>
</dbReference>
<dbReference type="InterPro" id="IPR008824">
    <property type="entry name" value="RuvB-like_N"/>
</dbReference>
<dbReference type="InterPro" id="IPR008823">
    <property type="entry name" value="RuvB_C"/>
</dbReference>
<dbReference type="InterPro" id="IPR036388">
    <property type="entry name" value="WH-like_DNA-bd_sf"/>
</dbReference>
<dbReference type="InterPro" id="IPR036390">
    <property type="entry name" value="WH_DNA-bd_sf"/>
</dbReference>
<dbReference type="NCBIfam" id="NF000868">
    <property type="entry name" value="PRK00080.1"/>
    <property type="match status" value="1"/>
</dbReference>
<dbReference type="NCBIfam" id="TIGR00635">
    <property type="entry name" value="ruvB"/>
    <property type="match status" value="1"/>
</dbReference>
<dbReference type="PANTHER" id="PTHR42848">
    <property type="match status" value="1"/>
</dbReference>
<dbReference type="PANTHER" id="PTHR42848:SF1">
    <property type="entry name" value="HOLLIDAY JUNCTION BRANCH MIGRATION COMPLEX SUBUNIT RUVB"/>
    <property type="match status" value="1"/>
</dbReference>
<dbReference type="Pfam" id="PF17864">
    <property type="entry name" value="AAA_lid_4"/>
    <property type="match status" value="1"/>
</dbReference>
<dbReference type="Pfam" id="PF05491">
    <property type="entry name" value="RuvB_C"/>
    <property type="match status" value="1"/>
</dbReference>
<dbReference type="Pfam" id="PF05496">
    <property type="entry name" value="RuvB_N"/>
    <property type="match status" value="1"/>
</dbReference>
<dbReference type="PRINTS" id="PR00830">
    <property type="entry name" value="ENDOLAPTASE"/>
</dbReference>
<dbReference type="SMART" id="SM00382">
    <property type="entry name" value="AAA"/>
    <property type="match status" value="1"/>
</dbReference>
<dbReference type="SUPFAM" id="SSF52540">
    <property type="entry name" value="P-loop containing nucleoside triphosphate hydrolases"/>
    <property type="match status" value="1"/>
</dbReference>
<dbReference type="SUPFAM" id="SSF46785">
    <property type="entry name" value="Winged helix' DNA-binding domain"/>
    <property type="match status" value="1"/>
</dbReference>
<comment type="function">
    <text evidence="1">The RuvA-RuvB-RuvC complex processes Holliday junction (HJ) DNA during genetic recombination and DNA repair, while the RuvA-RuvB complex plays an important role in the rescue of blocked DNA replication forks via replication fork reversal (RFR). RuvA specifically binds to HJ cruciform DNA, conferring on it an open structure. The RuvB hexamer acts as an ATP-dependent pump, pulling dsDNA into and through the RuvAB complex. RuvB forms 2 homohexamers on either side of HJ DNA bound by 1 or 2 RuvA tetramers; 4 subunits per hexamer contact DNA at a time. Coordinated motions by a converter formed by DNA-disengaged RuvB subunits stimulates ATP hydrolysis and nucleotide exchange. Immobilization of the converter enables RuvB to convert the ATP-contained energy into a lever motion, pulling 2 nucleotides of DNA out of the RuvA tetramer per ATP hydrolyzed, thus driving DNA branch migration. The RuvB motors rotate together with the DNA substrate, which together with the progressing nucleotide cycle form the mechanistic basis for DNA recombination by continuous HJ branch migration. Branch migration allows RuvC to scan DNA until it finds its consensus sequence, where it cleaves and resolves cruciform DNA.</text>
</comment>
<comment type="catalytic activity">
    <reaction evidence="1">
        <text>ATP + H2O = ADP + phosphate + H(+)</text>
        <dbReference type="Rhea" id="RHEA:13065"/>
        <dbReference type="ChEBI" id="CHEBI:15377"/>
        <dbReference type="ChEBI" id="CHEBI:15378"/>
        <dbReference type="ChEBI" id="CHEBI:30616"/>
        <dbReference type="ChEBI" id="CHEBI:43474"/>
        <dbReference type="ChEBI" id="CHEBI:456216"/>
    </reaction>
</comment>
<comment type="subunit">
    <text evidence="1">Homohexamer. Forms an RuvA(8)-RuvB(12)-Holliday junction (HJ) complex. HJ DNA is sandwiched between 2 RuvA tetramers; dsDNA enters through RuvA and exits via RuvB. An RuvB hexamer assembles on each DNA strand where it exits the tetramer. Each RuvB hexamer is contacted by two RuvA subunits (via domain III) on 2 adjacent RuvB subunits; this complex drives branch migration. In the full resolvosome a probable DNA-RuvA(4)-RuvB(12)-RuvC(2) complex forms which resolves the HJ.</text>
</comment>
<comment type="subcellular location">
    <subcellularLocation>
        <location evidence="1">Cytoplasm</location>
    </subcellularLocation>
</comment>
<comment type="domain">
    <text evidence="1">Has 3 domains, the large (RuvB-L) and small ATPase (RuvB-S) domains and the C-terminal head (RuvB-H) domain. The head domain binds DNA, while the ATPase domains jointly bind ATP, ADP or are empty depending on the state of the subunit in the translocation cycle. During a single DNA translocation step the structure of each domain remains the same, but their relative positions change.</text>
</comment>
<comment type="similarity">
    <text evidence="1">Belongs to the RuvB family.</text>
</comment>
<sequence>MSPPDRPQRLVEQDRIGGDAAEASIRPLSLAEFIGQRQVRENLSVFIQAARGRKEALDHVLLFGPPGLGKTTLAQIVAKELNVGFRATSGPVIAKAGDLAALLTNLQPHDVLFIDEIHRLSPAVEEILYPAMEDFQLDLIIGEGPAARSVRIDLPPFTLVGATTRSGLITRPLRERFGIPLRMQFYEPEELQLIVARGARILGMELTGEGALEIARRSRGTPRVAGRLLRRVRDICGVAGLAVVDAAAAGGALTRLEVDRLGFDAMDRRYLRCIADNYGGGPVGVETLGAALGEQRDVLEETIEPYLIQQGLLQRTPRGRLLTDSGYRYLGLPPPATPARQLDLLGGAGPGGGTPEGEGEDV</sequence>
<reference key="1">
    <citation type="submission" date="2007-03" db="EMBL/GenBank/DDBJ databases">
        <title>Genome sequence of Rhodospirillum centenum.</title>
        <authorList>
            <person name="Touchman J.W."/>
            <person name="Bauer C."/>
            <person name="Blankenship R.E."/>
        </authorList>
    </citation>
    <scope>NUCLEOTIDE SEQUENCE [LARGE SCALE GENOMIC DNA]</scope>
    <source>
        <strain>ATCC 51521 / SW</strain>
    </source>
</reference>
<feature type="chain" id="PRO_1000089669" description="Holliday junction branch migration complex subunit RuvB">
    <location>
        <begin position="1"/>
        <end position="362"/>
    </location>
</feature>
<feature type="region of interest" description="Large ATPase domain (RuvB-L)" evidence="1">
    <location>
        <begin position="4"/>
        <end position="186"/>
    </location>
</feature>
<feature type="region of interest" description="Small ATPAse domain (RuvB-S)" evidence="1">
    <location>
        <begin position="187"/>
        <end position="257"/>
    </location>
</feature>
<feature type="region of interest" description="Head domain (RuvB-H)" evidence="1">
    <location>
        <begin position="260"/>
        <end position="362"/>
    </location>
</feature>
<feature type="binding site" evidence="1">
    <location>
        <position position="25"/>
    </location>
    <ligand>
        <name>ATP</name>
        <dbReference type="ChEBI" id="CHEBI:30616"/>
    </ligand>
</feature>
<feature type="binding site" evidence="1">
    <location>
        <position position="26"/>
    </location>
    <ligand>
        <name>ATP</name>
        <dbReference type="ChEBI" id="CHEBI:30616"/>
    </ligand>
</feature>
<feature type="binding site" evidence="1">
    <location>
        <position position="67"/>
    </location>
    <ligand>
        <name>ATP</name>
        <dbReference type="ChEBI" id="CHEBI:30616"/>
    </ligand>
</feature>
<feature type="binding site" evidence="1">
    <location>
        <position position="70"/>
    </location>
    <ligand>
        <name>ATP</name>
        <dbReference type="ChEBI" id="CHEBI:30616"/>
    </ligand>
</feature>
<feature type="binding site" evidence="1">
    <location>
        <position position="71"/>
    </location>
    <ligand>
        <name>ATP</name>
        <dbReference type="ChEBI" id="CHEBI:30616"/>
    </ligand>
</feature>
<feature type="binding site" evidence="1">
    <location>
        <position position="71"/>
    </location>
    <ligand>
        <name>Mg(2+)</name>
        <dbReference type="ChEBI" id="CHEBI:18420"/>
    </ligand>
</feature>
<feature type="binding site" evidence="1">
    <location>
        <position position="72"/>
    </location>
    <ligand>
        <name>ATP</name>
        <dbReference type="ChEBI" id="CHEBI:30616"/>
    </ligand>
</feature>
<feature type="binding site" evidence="1">
    <location>
        <begin position="133"/>
        <end position="135"/>
    </location>
    <ligand>
        <name>ATP</name>
        <dbReference type="ChEBI" id="CHEBI:30616"/>
    </ligand>
</feature>
<feature type="binding site" evidence="1">
    <location>
        <position position="176"/>
    </location>
    <ligand>
        <name>ATP</name>
        <dbReference type="ChEBI" id="CHEBI:30616"/>
    </ligand>
</feature>
<feature type="binding site" evidence="1">
    <location>
        <position position="186"/>
    </location>
    <ligand>
        <name>ATP</name>
        <dbReference type="ChEBI" id="CHEBI:30616"/>
    </ligand>
</feature>
<feature type="binding site" evidence="1">
    <location>
        <position position="223"/>
    </location>
    <ligand>
        <name>ATP</name>
        <dbReference type="ChEBI" id="CHEBI:30616"/>
    </ligand>
</feature>
<feature type="binding site" evidence="1">
    <location>
        <position position="296"/>
    </location>
    <ligand>
        <name>DNA</name>
        <dbReference type="ChEBI" id="CHEBI:16991"/>
    </ligand>
</feature>
<feature type="binding site" evidence="1">
    <location>
        <position position="315"/>
    </location>
    <ligand>
        <name>DNA</name>
        <dbReference type="ChEBI" id="CHEBI:16991"/>
    </ligand>
</feature>
<feature type="binding site" evidence="1">
    <location>
        <position position="320"/>
    </location>
    <ligand>
        <name>DNA</name>
        <dbReference type="ChEBI" id="CHEBI:16991"/>
    </ligand>
</feature>
<protein>
    <recommendedName>
        <fullName evidence="1">Holliday junction branch migration complex subunit RuvB</fullName>
        <ecNumber evidence="1">3.6.4.-</ecNumber>
    </recommendedName>
</protein>